<comment type="function">
    <text evidence="1">Catalyzes the anti-1,4-elimination of the C-3 phosphate and the C-6 proR hydrogen from 5-enolpyruvylshikimate-3-phosphate (EPSP) to yield chorismate, which is the branch point compound that serves as the starting substrate for the three terminal pathways of aromatic amino acid biosynthesis. This reaction introduces a second double bond into the aromatic ring system.</text>
</comment>
<comment type="catalytic activity">
    <reaction evidence="1">
        <text>5-O-(1-carboxyvinyl)-3-phosphoshikimate = chorismate + phosphate</text>
        <dbReference type="Rhea" id="RHEA:21020"/>
        <dbReference type="ChEBI" id="CHEBI:29748"/>
        <dbReference type="ChEBI" id="CHEBI:43474"/>
        <dbReference type="ChEBI" id="CHEBI:57701"/>
        <dbReference type="EC" id="4.2.3.5"/>
    </reaction>
</comment>
<comment type="cofactor">
    <cofactor evidence="1">
        <name>FMNH2</name>
        <dbReference type="ChEBI" id="CHEBI:57618"/>
    </cofactor>
    <text evidence="1">Reduced FMN (FMNH(2)).</text>
</comment>
<comment type="pathway">
    <text evidence="1">Metabolic intermediate biosynthesis; chorismate biosynthesis; chorismate from D-erythrose 4-phosphate and phosphoenolpyruvate: step 7/7.</text>
</comment>
<comment type="subunit">
    <text evidence="1">Homotetramer.</text>
</comment>
<comment type="similarity">
    <text evidence="1">Belongs to the chorismate synthase family.</text>
</comment>
<sequence>MAGNSIGQLFRVTTCGESHGVGLMAIVDGVPPGLALTEEDLQKDLDRRKPGTSKFATQRKEPDQVEIISGVFEGKTTGTPIGLLIRNTDQKSKDYGNIAQTFRPGHADYTYTQKYGFRDYRGGGRSSARETAMRVAAGAIAKKYLAEKFGVLIRGHVTQIGNEVAEKLDWNEVPNNPFFCGDVDAVPRFEALVTSLREQGTSCGAKLEILAEKVPVGWGEPVFDRLDADIAHAMMSINAVKGVEIGDGFAVAGQFGHETRDELTSHGFLANHAGGILGGISSGQTIRVAIALKPTASITTPGKTINLNREDTDVLTKGRHDPCVGVRATPIAEAMLAIVLMDHFLRHRAQNADVVPPFAPIEP</sequence>
<protein>
    <recommendedName>
        <fullName evidence="1">Chorismate synthase</fullName>
        <shortName evidence="1">CS</shortName>
        <ecNumber evidence="1">4.2.3.5</ecNumber>
    </recommendedName>
    <alternativeName>
        <fullName evidence="1">5-enolpyruvylshikimate-3-phosphate phospholyase</fullName>
    </alternativeName>
</protein>
<feature type="chain" id="PRO_1000115320" description="Chorismate synthase">
    <location>
        <begin position="1"/>
        <end position="363"/>
    </location>
</feature>
<feature type="binding site" evidence="1">
    <location>
        <position position="48"/>
    </location>
    <ligand>
        <name>NADP(+)</name>
        <dbReference type="ChEBI" id="CHEBI:58349"/>
    </ligand>
</feature>
<feature type="binding site" evidence="1">
    <location>
        <begin position="125"/>
        <end position="127"/>
    </location>
    <ligand>
        <name>FMN</name>
        <dbReference type="ChEBI" id="CHEBI:58210"/>
    </ligand>
</feature>
<feature type="binding site" evidence="1">
    <location>
        <begin position="238"/>
        <end position="239"/>
    </location>
    <ligand>
        <name>FMN</name>
        <dbReference type="ChEBI" id="CHEBI:58210"/>
    </ligand>
</feature>
<feature type="binding site" evidence="1">
    <location>
        <position position="278"/>
    </location>
    <ligand>
        <name>FMN</name>
        <dbReference type="ChEBI" id="CHEBI:58210"/>
    </ligand>
</feature>
<feature type="binding site" evidence="1">
    <location>
        <begin position="293"/>
        <end position="297"/>
    </location>
    <ligand>
        <name>FMN</name>
        <dbReference type="ChEBI" id="CHEBI:58210"/>
    </ligand>
</feature>
<feature type="binding site" evidence="1">
    <location>
        <position position="319"/>
    </location>
    <ligand>
        <name>FMN</name>
        <dbReference type="ChEBI" id="CHEBI:58210"/>
    </ligand>
</feature>
<feature type="strand" evidence="2">
    <location>
        <begin position="8"/>
        <end position="15"/>
    </location>
</feature>
<feature type="strand" evidence="2">
    <location>
        <begin position="20"/>
        <end position="28"/>
    </location>
</feature>
<feature type="helix" evidence="2">
    <location>
        <begin position="38"/>
        <end position="46"/>
    </location>
</feature>
<feature type="strand" evidence="2">
    <location>
        <begin position="65"/>
        <end position="67"/>
    </location>
</feature>
<feature type="strand" evidence="2">
    <location>
        <begin position="69"/>
        <end position="72"/>
    </location>
</feature>
<feature type="strand" evidence="2">
    <location>
        <begin position="81"/>
        <end position="86"/>
    </location>
</feature>
<feature type="turn" evidence="2">
    <location>
        <begin position="128"/>
        <end position="131"/>
    </location>
</feature>
<feature type="helix" evidence="2">
    <location>
        <begin position="132"/>
        <end position="149"/>
    </location>
</feature>
<feature type="strand" evidence="2">
    <location>
        <begin position="152"/>
        <end position="160"/>
    </location>
</feature>
<feature type="turn" evidence="2">
    <location>
        <begin position="170"/>
        <end position="175"/>
    </location>
</feature>
<feature type="turn" evidence="2">
    <location>
        <begin position="183"/>
        <end position="185"/>
    </location>
</feature>
<feature type="helix" evidence="2">
    <location>
        <begin position="186"/>
        <end position="199"/>
    </location>
</feature>
<feature type="strand" evidence="2">
    <location>
        <begin position="205"/>
        <end position="213"/>
    </location>
</feature>
<feature type="helix" evidence="2">
    <location>
        <begin position="226"/>
        <end position="234"/>
    </location>
</feature>
<feature type="strand" evidence="2">
    <location>
        <begin position="240"/>
        <end position="245"/>
    </location>
</feature>
<feature type="helix" evidence="2">
    <location>
        <begin position="248"/>
        <end position="253"/>
    </location>
</feature>
<feature type="strand" evidence="2">
    <location>
        <begin position="286"/>
        <end position="292"/>
    </location>
</feature>
<feature type="helix" evidence="2">
    <location>
        <begin position="324"/>
        <end position="328"/>
    </location>
</feature>
<feature type="helix" evidence="2">
    <location>
        <begin position="329"/>
        <end position="350"/>
    </location>
</feature>
<accession>B0VDX7</accession>
<dbReference type="EC" id="4.2.3.5" evidence="1"/>
<dbReference type="EMBL" id="CU459141">
    <property type="protein sequence ID" value="CAM86832.1"/>
    <property type="molecule type" value="Genomic_DNA"/>
</dbReference>
<dbReference type="RefSeq" id="WP_000918444.1">
    <property type="nucleotide sequence ID" value="NZ_JBDGFB010000001.1"/>
</dbReference>
<dbReference type="PDB" id="5WUY">
    <property type="method" value="X-ray"/>
    <property type="resolution" value="2.50 A"/>
    <property type="chains" value="A/B=1-363"/>
</dbReference>
<dbReference type="PDBsum" id="5WUY"/>
<dbReference type="SMR" id="B0VDX7"/>
<dbReference type="EnsemblBacteria" id="CAM86832">
    <property type="protein sequence ID" value="CAM86832"/>
    <property type="gene ID" value="ABAYE1953"/>
</dbReference>
<dbReference type="GeneID" id="92893903"/>
<dbReference type="KEGG" id="aby:ABAYE1953"/>
<dbReference type="HOGENOM" id="CLU_034547_0_2_6"/>
<dbReference type="UniPathway" id="UPA00053">
    <property type="reaction ID" value="UER00090"/>
</dbReference>
<dbReference type="GO" id="GO:0005829">
    <property type="term" value="C:cytosol"/>
    <property type="evidence" value="ECO:0007669"/>
    <property type="project" value="TreeGrafter"/>
</dbReference>
<dbReference type="GO" id="GO:0004107">
    <property type="term" value="F:chorismate synthase activity"/>
    <property type="evidence" value="ECO:0007669"/>
    <property type="project" value="UniProtKB-UniRule"/>
</dbReference>
<dbReference type="GO" id="GO:0010181">
    <property type="term" value="F:FMN binding"/>
    <property type="evidence" value="ECO:0007669"/>
    <property type="project" value="TreeGrafter"/>
</dbReference>
<dbReference type="GO" id="GO:0008652">
    <property type="term" value="P:amino acid biosynthetic process"/>
    <property type="evidence" value="ECO:0007669"/>
    <property type="project" value="UniProtKB-KW"/>
</dbReference>
<dbReference type="GO" id="GO:0009073">
    <property type="term" value="P:aromatic amino acid family biosynthetic process"/>
    <property type="evidence" value="ECO:0007669"/>
    <property type="project" value="UniProtKB-KW"/>
</dbReference>
<dbReference type="GO" id="GO:0009423">
    <property type="term" value="P:chorismate biosynthetic process"/>
    <property type="evidence" value="ECO:0007669"/>
    <property type="project" value="UniProtKB-UniRule"/>
</dbReference>
<dbReference type="CDD" id="cd07304">
    <property type="entry name" value="Chorismate_synthase"/>
    <property type="match status" value="1"/>
</dbReference>
<dbReference type="FunFam" id="3.60.150.10:FF:000001">
    <property type="entry name" value="Chorismate synthase"/>
    <property type="match status" value="1"/>
</dbReference>
<dbReference type="Gene3D" id="3.60.150.10">
    <property type="entry name" value="Chorismate synthase AroC"/>
    <property type="match status" value="1"/>
</dbReference>
<dbReference type="HAMAP" id="MF_00300">
    <property type="entry name" value="Chorismate_synth"/>
    <property type="match status" value="1"/>
</dbReference>
<dbReference type="InterPro" id="IPR000453">
    <property type="entry name" value="Chorismate_synth"/>
</dbReference>
<dbReference type="InterPro" id="IPR035904">
    <property type="entry name" value="Chorismate_synth_AroC_sf"/>
</dbReference>
<dbReference type="InterPro" id="IPR020541">
    <property type="entry name" value="Chorismate_synthase_CS"/>
</dbReference>
<dbReference type="NCBIfam" id="TIGR00033">
    <property type="entry name" value="aroC"/>
    <property type="match status" value="1"/>
</dbReference>
<dbReference type="NCBIfam" id="NF003793">
    <property type="entry name" value="PRK05382.1"/>
    <property type="match status" value="1"/>
</dbReference>
<dbReference type="PANTHER" id="PTHR21085">
    <property type="entry name" value="CHORISMATE SYNTHASE"/>
    <property type="match status" value="1"/>
</dbReference>
<dbReference type="PANTHER" id="PTHR21085:SF0">
    <property type="entry name" value="CHORISMATE SYNTHASE"/>
    <property type="match status" value="1"/>
</dbReference>
<dbReference type="Pfam" id="PF01264">
    <property type="entry name" value="Chorismate_synt"/>
    <property type="match status" value="1"/>
</dbReference>
<dbReference type="PIRSF" id="PIRSF001456">
    <property type="entry name" value="Chorismate_synth"/>
    <property type="match status" value="1"/>
</dbReference>
<dbReference type="SUPFAM" id="SSF103263">
    <property type="entry name" value="Chorismate synthase, AroC"/>
    <property type="match status" value="1"/>
</dbReference>
<dbReference type="PROSITE" id="PS00787">
    <property type="entry name" value="CHORISMATE_SYNTHASE_1"/>
    <property type="match status" value="1"/>
</dbReference>
<dbReference type="PROSITE" id="PS00788">
    <property type="entry name" value="CHORISMATE_SYNTHASE_2"/>
    <property type="match status" value="1"/>
</dbReference>
<dbReference type="PROSITE" id="PS00789">
    <property type="entry name" value="CHORISMATE_SYNTHASE_3"/>
    <property type="match status" value="1"/>
</dbReference>
<proteinExistence type="evidence at protein level"/>
<gene>
    <name evidence="1" type="primary">aroC</name>
    <name type="ordered locus">ABAYE1953</name>
</gene>
<name>AROC_ACIBY</name>
<organism>
    <name type="scientific">Acinetobacter baumannii (strain AYE)</name>
    <dbReference type="NCBI Taxonomy" id="509173"/>
    <lineage>
        <taxon>Bacteria</taxon>
        <taxon>Pseudomonadati</taxon>
        <taxon>Pseudomonadota</taxon>
        <taxon>Gammaproteobacteria</taxon>
        <taxon>Moraxellales</taxon>
        <taxon>Moraxellaceae</taxon>
        <taxon>Acinetobacter</taxon>
        <taxon>Acinetobacter calcoaceticus/baumannii complex</taxon>
    </lineage>
</organism>
<evidence type="ECO:0000255" key="1">
    <source>
        <dbReference type="HAMAP-Rule" id="MF_00300"/>
    </source>
</evidence>
<evidence type="ECO:0007829" key="2">
    <source>
        <dbReference type="PDB" id="5WUY"/>
    </source>
</evidence>
<keyword id="KW-0002">3D-structure</keyword>
<keyword id="KW-0028">Amino-acid biosynthesis</keyword>
<keyword id="KW-0057">Aromatic amino acid biosynthesis</keyword>
<keyword id="KW-0274">FAD</keyword>
<keyword id="KW-0285">Flavoprotein</keyword>
<keyword id="KW-0288">FMN</keyword>
<keyword id="KW-0456">Lyase</keyword>
<keyword id="KW-0521">NADP</keyword>
<reference key="1">
    <citation type="journal article" date="2008" name="PLoS ONE">
        <title>Comparative analysis of Acinetobacters: three genomes for three lifestyles.</title>
        <authorList>
            <person name="Vallenet D."/>
            <person name="Nordmann P."/>
            <person name="Barbe V."/>
            <person name="Poirel L."/>
            <person name="Mangenot S."/>
            <person name="Bataille E."/>
            <person name="Dossat C."/>
            <person name="Gas S."/>
            <person name="Kreimeyer A."/>
            <person name="Lenoble P."/>
            <person name="Oztas S."/>
            <person name="Poulain J."/>
            <person name="Segurens B."/>
            <person name="Robert C."/>
            <person name="Abergel C."/>
            <person name="Claverie J.-M."/>
            <person name="Raoult D."/>
            <person name="Medigue C."/>
            <person name="Weissenbach J."/>
            <person name="Cruveiller S."/>
        </authorList>
    </citation>
    <scope>NUCLEOTIDE SEQUENCE [LARGE SCALE GENOMIC DNA]</scope>
    <source>
        <strain>AYE</strain>
    </source>
</reference>